<reference key="1">
    <citation type="submission" date="2006-01" db="EMBL/GenBank/DDBJ databases">
        <title>Complete sequence of Novosphingobium aromaticivorans DSM 12444.</title>
        <authorList>
            <consortium name="US DOE Joint Genome Institute"/>
            <person name="Copeland A."/>
            <person name="Lucas S."/>
            <person name="Lapidus A."/>
            <person name="Barry K."/>
            <person name="Detter J.C."/>
            <person name="Glavina T."/>
            <person name="Hammon N."/>
            <person name="Israni S."/>
            <person name="Pitluck S."/>
            <person name="Chain P."/>
            <person name="Malfatti S."/>
            <person name="Shin M."/>
            <person name="Vergez L."/>
            <person name="Schmutz J."/>
            <person name="Larimer F."/>
            <person name="Land M."/>
            <person name="Kyrpides N."/>
            <person name="Ivanova N."/>
            <person name="Fredrickson J."/>
            <person name="Balkwill D."/>
            <person name="Romine M.F."/>
            <person name="Richardson P."/>
        </authorList>
    </citation>
    <scope>NUCLEOTIDE SEQUENCE [LARGE SCALE GENOMIC DNA]</scope>
    <source>
        <strain>ATCC 700278 / DSM 12444 / CCUG 56034 / CIP 105152 / NBRC 16084 / F199</strain>
    </source>
</reference>
<accession>Q2G9D9</accession>
<dbReference type="EC" id="6.1.1.19" evidence="1"/>
<dbReference type="EMBL" id="CP000248">
    <property type="protein sequence ID" value="ABD25534.1"/>
    <property type="molecule type" value="Genomic_DNA"/>
</dbReference>
<dbReference type="RefSeq" id="WP_011444748.1">
    <property type="nucleotide sequence ID" value="NC_007794.1"/>
</dbReference>
<dbReference type="SMR" id="Q2G9D9"/>
<dbReference type="STRING" id="279238.Saro_1089"/>
<dbReference type="KEGG" id="nar:Saro_1089"/>
<dbReference type="eggNOG" id="COG0018">
    <property type="taxonomic scope" value="Bacteria"/>
</dbReference>
<dbReference type="HOGENOM" id="CLU_006406_0_1_5"/>
<dbReference type="Proteomes" id="UP000009134">
    <property type="component" value="Chromosome"/>
</dbReference>
<dbReference type="GO" id="GO:0005737">
    <property type="term" value="C:cytoplasm"/>
    <property type="evidence" value="ECO:0007669"/>
    <property type="project" value="UniProtKB-SubCell"/>
</dbReference>
<dbReference type="GO" id="GO:0004814">
    <property type="term" value="F:arginine-tRNA ligase activity"/>
    <property type="evidence" value="ECO:0007669"/>
    <property type="project" value="UniProtKB-UniRule"/>
</dbReference>
<dbReference type="GO" id="GO:0005524">
    <property type="term" value="F:ATP binding"/>
    <property type="evidence" value="ECO:0007669"/>
    <property type="project" value="UniProtKB-UniRule"/>
</dbReference>
<dbReference type="GO" id="GO:0006420">
    <property type="term" value="P:arginyl-tRNA aminoacylation"/>
    <property type="evidence" value="ECO:0007669"/>
    <property type="project" value="UniProtKB-UniRule"/>
</dbReference>
<dbReference type="CDD" id="cd00671">
    <property type="entry name" value="ArgRS_core"/>
    <property type="match status" value="1"/>
</dbReference>
<dbReference type="Gene3D" id="3.30.1360.70">
    <property type="entry name" value="Arginyl tRNA synthetase N-terminal domain"/>
    <property type="match status" value="1"/>
</dbReference>
<dbReference type="Gene3D" id="3.40.50.620">
    <property type="entry name" value="HUPs"/>
    <property type="match status" value="1"/>
</dbReference>
<dbReference type="Gene3D" id="1.10.730.10">
    <property type="entry name" value="Isoleucyl-tRNA Synthetase, Domain 1"/>
    <property type="match status" value="1"/>
</dbReference>
<dbReference type="HAMAP" id="MF_00123">
    <property type="entry name" value="Arg_tRNA_synth"/>
    <property type="match status" value="1"/>
</dbReference>
<dbReference type="InterPro" id="IPR001412">
    <property type="entry name" value="aa-tRNA-synth_I_CS"/>
</dbReference>
<dbReference type="InterPro" id="IPR002300">
    <property type="entry name" value="aa-tRNA-synth_Ia"/>
</dbReference>
<dbReference type="InterPro" id="IPR001278">
    <property type="entry name" value="Arg-tRNA-ligase"/>
</dbReference>
<dbReference type="InterPro" id="IPR005148">
    <property type="entry name" value="Arg-tRNA-synth_N"/>
</dbReference>
<dbReference type="InterPro" id="IPR036695">
    <property type="entry name" value="Arg-tRNA-synth_N_sf"/>
</dbReference>
<dbReference type="InterPro" id="IPR035684">
    <property type="entry name" value="ArgRS_core"/>
</dbReference>
<dbReference type="InterPro" id="IPR008909">
    <property type="entry name" value="DALR_anticod-bd"/>
</dbReference>
<dbReference type="InterPro" id="IPR014729">
    <property type="entry name" value="Rossmann-like_a/b/a_fold"/>
</dbReference>
<dbReference type="InterPro" id="IPR009080">
    <property type="entry name" value="tRNAsynth_Ia_anticodon-bd"/>
</dbReference>
<dbReference type="NCBIfam" id="TIGR00456">
    <property type="entry name" value="argS"/>
    <property type="match status" value="1"/>
</dbReference>
<dbReference type="PANTHER" id="PTHR11956:SF5">
    <property type="entry name" value="ARGININE--TRNA LIGASE, CYTOPLASMIC"/>
    <property type="match status" value="1"/>
</dbReference>
<dbReference type="PANTHER" id="PTHR11956">
    <property type="entry name" value="ARGINYL-TRNA SYNTHETASE"/>
    <property type="match status" value="1"/>
</dbReference>
<dbReference type="Pfam" id="PF03485">
    <property type="entry name" value="Arg_tRNA_synt_N"/>
    <property type="match status" value="1"/>
</dbReference>
<dbReference type="Pfam" id="PF05746">
    <property type="entry name" value="DALR_1"/>
    <property type="match status" value="1"/>
</dbReference>
<dbReference type="Pfam" id="PF00133">
    <property type="entry name" value="tRNA-synt_1"/>
    <property type="match status" value="1"/>
</dbReference>
<dbReference type="Pfam" id="PF00750">
    <property type="entry name" value="tRNA-synt_1d"/>
    <property type="match status" value="1"/>
</dbReference>
<dbReference type="PRINTS" id="PR01038">
    <property type="entry name" value="TRNASYNTHARG"/>
</dbReference>
<dbReference type="SMART" id="SM01016">
    <property type="entry name" value="Arg_tRNA_synt_N"/>
    <property type="match status" value="1"/>
</dbReference>
<dbReference type="SMART" id="SM00836">
    <property type="entry name" value="DALR_1"/>
    <property type="match status" value="1"/>
</dbReference>
<dbReference type="SUPFAM" id="SSF47323">
    <property type="entry name" value="Anticodon-binding domain of a subclass of class I aminoacyl-tRNA synthetases"/>
    <property type="match status" value="1"/>
</dbReference>
<dbReference type="SUPFAM" id="SSF55190">
    <property type="entry name" value="Arginyl-tRNA synthetase (ArgRS), N-terminal 'additional' domain"/>
    <property type="match status" value="1"/>
</dbReference>
<dbReference type="SUPFAM" id="SSF52374">
    <property type="entry name" value="Nucleotidylyl transferase"/>
    <property type="match status" value="1"/>
</dbReference>
<dbReference type="PROSITE" id="PS00178">
    <property type="entry name" value="AA_TRNA_LIGASE_I"/>
    <property type="match status" value="1"/>
</dbReference>
<name>SYR_NOVAD</name>
<organism>
    <name type="scientific">Novosphingobium aromaticivorans (strain ATCC 700278 / DSM 12444 / CCUG 56034 / CIP 105152 / NBRC 16084 / F199)</name>
    <dbReference type="NCBI Taxonomy" id="279238"/>
    <lineage>
        <taxon>Bacteria</taxon>
        <taxon>Pseudomonadati</taxon>
        <taxon>Pseudomonadota</taxon>
        <taxon>Alphaproteobacteria</taxon>
        <taxon>Sphingomonadales</taxon>
        <taxon>Sphingomonadaceae</taxon>
        <taxon>Novosphingobium</taxon>
    </lineage>
</organism>
<gene>
    <name evidence="1" type="primary">argS</name>
    <name type="ordered locus">Saro_1089</name>
</gene>
<proteinExistence type="inferred from homology"/>
<sequence>MTDATINLHADFARVIDAALDALEAAGTLPGTLSRSAVTCEPPRDPSHGDLATNAAMVLAKPAGTNPRALATALAAELEKEPRVVSAEIAGPGFINLRLTDDAWRGELALIGSAGADYGRSTMGGSKVVNVEYVSANPTGPMHMGHCRGAVVGDALADLLAFSGHQVIKEYYVNDAGAQVDVLARSVHMRYREALGETVEIPEGLYPGDYLVPVGKALAEEFGDKYAKAAEADWLILFRTRAVAAMMDMIRSDLATLGIHHDLFSSEAELQASGKVDAAEQWLRAHDLVYDGLLEAPKGKTPEDWEPVVLPLFRSTKFGDDQDRPIKKSNGAWTYFGADLAYHFQKAQTADALVDIWGADHAGTVKRIKAAVAALTSADGGTPKPFEVKLVQMVQLLRDGEPVKMSKRSGNFVTLSDVVEEVGKDVVRFTMLTRKPDAQMDFDFAKVVEASKDNPVFYVQYAHARICRNLRKGADEGFAPSSANLDLLGDEELALVKLAAQFPRTIEAAAAAREPHRIAFFLHDLASAFHSFYNLGNDRPDKRFIVAQDSAMTAARLFLAAQIGQVIRNGLAVLGVEAAQEL</sequence>
<protein>
    <recommendedName>
        <fullName evidence="1">Arginine--tRNA ligase</fullName>
        <ecNumber evidence="1">6.1.1.19</ecNumber>
    </recommendedName>
    <alternativeName>
        <fullName evidence="1">Arginyl-tRNA synthetase</fullName>
        <shortName evidence="1">ArgRS</shortName>
    </alternativeName>
</protein>
<feature type="chain" id="PRO_0000242059" description="Arginine--tRNA ligase">
    <location>
        <begin position="1"/>
        <end position="582"/>
    </location>
</feature>
<feature type="short sequence motif" description="'HIGH' region">
    <location>
        <begin position="136"/>
        <end position="146"/>
    </location>
</feature>
<comment type="catalytic activity">
    <reaction evidence="1">
        <text>tRNA(Arg) + L-arginine + ATP = L-arginyl-tRNA(Arg) + AMP + diphosphate</text>
        <dbReference type="Rhea" id="RHEA:20301"/>
        <dbReference type="Rhea" id="RHEA-COMP:9658"/>
        <dbReference type="Rhea" id="RHEA-COMP:9673"/>
        <dbReference type="ChEBI" id="CHEBI:30616"/>
        <dbReference type="ChEBI" id="CHEBI:32682"/>
        <dbReference type="ChEBI" id="CHEBI:33019"/>
        <dbReference type="ChEBI" id="CHEBI:78442"/>
        <dbReference type="ChEBI" id="CHEBI:78513"/>
        <dbReference type="ChEBI" id="CHEBI:456215"/>
        <dbReference type="EC" id="6.1.1.19"/>
    </reaction>
</comment>
<comment type="subunit">
    <text evidence="1">Monomer.</text>
</comment>
<comment type="subcellular location">
    <subcellularLocation>
        <location evidence="1">Cytoplasm</location>
    </subcellularLocation>
</comment>
<comment type="similarity">
    <text evidence="1">Belongs to the class-I aminoacyl-tRNA synthetase family.</text>
</comment>
<keyword id="KW-0030">Aminoacyl-tRNA synthetase</keyword>
<keyword id="KW-0067">ATP-binding</keyword>
<keyword id="KW-0963">Cytoplasm</keyword>
<keyword id="KW-0436">Ligase</keyword>
<keyword id="KW-0547">Nucleotide-binding</keyword>
<keyword id="KW-0648">Protein biosynthesis</keyword>
<keyword id="KW-1185">Reference proteome</keyword>
<evidence type="ECO:0000255" key="1">
    <source>
        <dbReference type="HAMAP-Rule" id="MF_00123"/>
    </source>
</evidence>